<dbReference type="EC" id="4.2.1.104" evidence="1"/>
<dbReference type="EMBL" id="BT052738">
    <property type="protein sequence ID" value="ACJ85401.1"/>
    <property type="molecule type" value="mRNA"/>
</dbReference>
<dbReference type="SMR" id="B7FKW7"/>
<dbReference type="ProMEX" id="B7FKW7"/>
<dbReference type="EnsemblPlants" id="rna2116">
    <property type="protein sequence ID" value="RHN78536.1"/>
    <property type="gene ID" value="gene2116"/>
</dbReference>
<dbReference type="GeneID" id="25482994"/>
<dbReference type="Gramene" id="rna2116">
    <property type="protein sequence ID" value="RHN78536.1"/>
    <property type="gene ID" value="gene2116"/>
</dbReference>
<dbReference type="KEGG" id="mtr:25482994"/>
<dbReference type="HOGENOM" id="CLU_103452_2_0_1"/>
<dbReference type="OrthoDB" id="10019422at2759"/>
<dbReference type="ExpressionAtlas" id="B7FKW7">
    <property type="expression patterns" value="differential"/>
</dbReference>
<dbReference type="GO" id="GO:0008824">
    <property type="term" value="F:cyanate hydratase activity"/>
    <property type="evidence" value="ECO:0007669"/>
    <property type="project" value="UniProtKB-UniRule"/>
</dbReference>
<dbReference type="GO" id="GO:0003677">
    <property type="term" value="F:DNA binding"/>
    <property type="evidence" value="ECO:0007669"/>
    <property type="project" value="InterPro"/>
</dbReference>
<dbReference type="GO" id="GO:0042802">
    <property type="term" value="F:identical protein binding"/>
    <property type="evidence" value="ECO:0007669"/>
    <property type="project" value="EnsemblPlants"/>
</dbReference>
<dbReference type="GO" id="GO:0009440">
    <property type="term" value="P:cyanate catabolic process"/>
    <property type="evidence" value="ECO:0007669"/>
    <property type="project" value="EnsemblPlants"/>
</dbReference>
<dbReference type="GO" id="GO:0009651">
    <property type="term" value="P:response to salt stress"/>
    <property type="evidence" value="ECO:0007669"/>
    <property type="project" value="EnsemblPlants"/>
</dbReference>
<dbReference type="CDD" id="cd00559">
    <property type="entry name" value="Cyanase_C"/>
    <property type="match status" value="1"/>
</dbReference>
<dbReference type="FunFam" id="3.30.1160.10:FF:000002">
    <property type="entry name" value="Cyanate hydratase"/>
    <property type="match status" value="1"/>
</dbReference>
<dbReference type="Gene3D" id="3.30.1160.10">
    <property type="entry name" value="Cyanate lyase, C-terminal domain"/>
    <property type="match status" value="1"/>
</dbReference>
<dbReference type="Gene3D" id="1.10.260.40">
    <property type="entry name" value="lambda repressor-like DNA-binding domains"/>
    <property type="match status" value="1"/>
</dbReference>
<dbReference type="HAMAP" id="MF_00535">
    <property type="entry name" value="Cyanate_hydrat"/>
    <property type="match status" value="1"/>
</dbReference>
<dbReference type="InterPro" id="IPR001387">
    <property type="entry name" value="Cro/C1-type_HTH"/>
</dbReference>
<dbReference type="InterPro" id="IPR008076">
    <property type="entry name" value="Cyanase"/>
</dbReference>
<dbReference type="InterPro" id="IPR003712">
    <property type="entry name" value="Cyanate_lyase_C"/>
</dbReference>
<dbReference type="InterPro" id="IPR036581">
    <property type="entry name" value="Cyanate_lyase_C_sf"/>
</dbReference>
<dbReference type="InterPro" id="IPR010982">
    <property type="entry name" value="Lambda_DNA-bd_dom_sf"/>
</dbReference>
<dbReference type="NCBIfam" id="TIGR00673">
    <property type="entry name" value="cynS"/>
    <property type="match status" value="1"/>
</dbReference>
<dbReference type="PANTHER" id="PTHR34186">
    <property type="entry name" value="CYANATE HYDRATASE"/>
    <property type="match status" value="1"/>
</dbReference>
<dbReference type="PANTHER" id="PTHR34186:SF2">
    <property type="entry name" value="CYANATE HYDRATASE"/>
    <property type="match status" value="1"/>
</dbReference>
<dbReference type="Pfam" id="PF02560">
    <property type="entry name" value="Cyanate_lyase"/>
    <property type="match status" value="1"/>
</dbReference>
<dbReference type="PIRSF" id="PIRSF001263">
    <property type="entry name" value="Cyanate_hydratas"/>
    <property type="match status" value="1"/>
</dbReference>
<dbReference type="PRINTS" id="PR01693">
    <property type="entry name" value="CYANASE"/>
</dbReference>
<dbReference type="SMART" id="SM01116">
    <property type="entry name" value="Cyanate_lyase"/>
    <property type="match status" value="1"/>
</dbReference>
<dbReference type="SUPFAM" id="SSF55234">
    <property type="entry name" value="Cyanase C-terminal domain"/>
    <property type="match status" value="1"/>
</dbReference>
<dbReference type="SUPFAM" id="SSF47413">
    <property type="entry name" value="lambda repressor-like DNA-binding domains"/>
    <property type="match status" value="1"/>
</dbReference>
<reference key="1">
    <citation type="submission" date="2008-12" db="EMBL/GenBank/DDBJ databases">
        <title>Medicago truncatula full length cDNA cloning project.</title>
        <authorList>
            <person name="Moskal W."/>
            <person name="Chan A."/>
            <person name="Cheung F."/>
            <person name="Xiao Y."/>
            <person name="Town C.D."/>
        </authorList>
    </citation>
    <scope>NUCLEOTIDE SEQUENCE [LARGE SCALE MRNA]</scope>
</reference>
<organism>
    <name type="scientific">Medicago truncatula</name>
    <name type="common">Barrel medic</name>
    <name type="synonym">Medicago tribuloides</name>
    <dbReference type="NCBI Taxonomy" id="3880"/>
    <lineage>
        <taxon>Eukaryota</taxon>
        <taxon>Viridiplantae</taxon>
        <taxon>Streptophyta</taxon>
        <taxon>Embryophyta</taxon>
        <taxon>Tracheophyta</taxon>
        <taxon>Spermatophyta</taxon>
        <taxon>Magnoliopsida</taxon>
        <taxon>eudicotyledons</taxon>
        <taxon>Gunneridae</taxon>
        <taxon>Pentapetalae</taxon>
        <taxon>rosids</taxon>
        <taxon>fabids</taxon>
        <taxon>Fabales</taxon>
        <taxon>Fabaceae</taxon>
        <taxon>Papilionoideae</taxon>
        <taxon>50 kb inversion clade</taxon>
        <taxon>NPAAA clade</taxon>
        <taxon>Hologalegina</taxon>
        <taxon>IRL clade</taxon>
        <taxon>Trifolieae</taxon>
        <taxon>Medicago</taxon>
    </lineage>
</organism>
<sequence>MAQNKANTVSQLQSLKNKSGKSYNQLAEETGLTNVYVAQLLRRQAHLKPETAPKLKAALPELPEELIHEMMKPPLRSYDPNIIQDPTVYRLNEAVMHFGESIKEIINEEFGDGIMSAIDFYCSVDKVQGVDGKDRVVLTFDGKYLPHSEQKTEHMVSRTRPLEKQ</sequence>
<keyword id="KW-0456">Lyase</keyword>
<name>CYNS_MEDTR</name>
<protein>
    <recommendedName>
        <fullName evidence="1">Cyanate hydratase</fullName>
        <shortName evidence="1">Cyanase</shortName>
        <ecNumber evidence="1">4.2.1.104</ecNumber>
    </recommendedName>
    <alternativeName>
        <fullName evidence="1">Cyanate hydrolase</fullName>
    </alternativeName>
    <alternativeName>
        <fullName evidence="1">Cyanate lyase</fullName>
    </alternativeName>
</protein>
<evidence type="ECO:0000255" key="1">
    <source>
        <dbReference type="HAMAP-Rule" id="MF_03139"/>
    </source>
</evidence>
<evidence type="ECO:0000256" key="2">
    <source>
        <dbReference type="SAM" id="MobiDB-lite"/>
    </source>
</evidence>
<comment type="function">
    <text evidence="1">Catalyzes the reaction of cyanate with bicarbonate to produce ammonia and carbon dioxide.</text>
</comment>
<comment type="catalytic activity">
    <reaction evidence="1">
        <text>cyanate + hydrogencarbonate + 3 H(+) = NH4(+) + 2 CO2</text>
        <dbReference type="Rhea" id="RHEA:11120"/>
        <dbReference type="ChEBI" id="CHEBI:15378"/>
        <dbReference type="ChEBI" id="CHEBI:16526"/>
        <dbReference type="ChEBI" id="CHEBI:17544"/>
        <dbReference type="ChEBI" id="CHEBI:28938"/>
        <dbReference type="ChEBI" id="CHEBI:29195"/>
        <dbReference type="EC" id="4.2.1.104"/>
    </reaction>
</comment>
<comment type="similarity">
    <text evidence="1">Belongs to the cyanase family.</text>
</comment>
<feature type="chain" id="PRO_0000403223" description="Cyanate hydratase">
    <location>
        <begin position="1"/>
        <end position="165"/>
    </location>
</feature>
<feature type="region of interest" description="Disordered" evidence="2">
    <location>
        <begin position="1"/>
        <end position="20"/>
    </location>
</feature>
<feature type="active site" evidence="1">
    <location>
        <position position="90"/>
    </location>
</feature>
<feature type="active site" evidence="1">
    <location>
        <position position="93"/>
    </location>
</feature>
<feature type="active site" evidence="1">
    <location>
        <position position="116"/>
    </location>
</feature>
<accession>B7FKW7</accession>
<proteinExistence type="evidence at transcript level"/>
<gene>
    <name evidence="1" type="primary">CYN</name>
</gene>